<reference key="1">
    <citation type="journal article" date="2007" name="PLoS Genet.">
        <title>Genome analysis of Minibacterium massiliensis highlights the convergent evolution of water-living bacteria.</title>
        <authorList>
            <person name="Audic S."/>
            <person name="Robert C."/>
            <person name="Campagna B."/>
            <person name="Parinello H."/>
            <person name="Claverie J.-M."/>
            <person name="Raoult D."/>
            <person name="Drancourt M."/>
        </authorList>
    </citation>
    <scope>NUCLEOTIDE SEQUENCE [LARGE SCALE GENOMIC DNA]</scope>
    <source>
        <strain>Marseille</strain>
    </source>
</reference>
<proteinExistence type="inferred from homology"/>
<keyword id="KW-0001">2Fe-2S</keyword>
<keyword id="KW-0004">4Fe-4S</keyword>
<keyword id="KW-0093">Biotin biosynthesis</keyword>
<keyword id="KW-0408">Iron</keyword>
<keyword id="KW-0411">Iron-sulfur</keyword>
<keyword id="KW-0479">Metal-binding</keyword>
<keyword id="KW-0949">S-adenosyl-L-methionine</keyword>
<keyword id="KW-0808">Transferase</keyword>
<accession>A6SU66</accession>
<organism>
    <name type="scientific">Janthinobacterium sp. (strain Marseille)</name>
    <name type="common">Minibacterium massiliensis</name>
    <dbReference type="NCBI Taxonomy" id="375286"/>
    <lineage>
        <taxon>Bacteria</taxon>
        <taxon>Pseudomonadati</taxon>
        <taxon>Pseudomonadota</taxon>
        <taxon>Betaproteobacteria</taxon>
        <taxon>Burkholderiales</taxon>
        <taxon>Oxalobacteraceae</taxon>
        <taxon>Janthinobacterium</taxon>
    </lineage>
</organism>
<protein>
    <recommendedName>
        <fullName evidence="1">Biotin synthase</fullName>
        <ecNumber evidence="1">2.8.1.6</ecNumber>
    </recommendedName>
</protein>
<evidence type="ECO:0000255" key="1">
    <source>
        <dbReference type="HAMAP-Rule" id="MF_01694"/>
    </source>
</evidence>
<evidence type="ECO:0000255" key="2">
    <source>
        <dbReference type="PROSITE-ProRule" id="PRU01266"/>
    </source>
</evidence>
<dbReference type="EC" id="2.8.1.6" evidence="1"/>
<dbReference type="EMBL" id="CP000269">
    <property type="protein sequence ID" value="ABR88586.1"/>
    <property type="molecule type" value="Genomic_DNA"/>
</dbReference>
<dbReference type="RefSeq" id="WP_011979349.1">
    <property type="nucleotide sequence ID" value="NC_009659.1"/>
</dbReference>
<dbReference type="SMR" id="A6SU66"/>
<dbReference type="STRING" id="375286.mma_0123"/>
<dbReference type="KEGG" id="mms:mma_0123"/>
<dbReference type="eggNOG" id="COG0502">
    <property type="taxonomic scope" value="Bacteria"/>
</dbReference>
<dbReference type="HOGENOM" id="CLU_033172_1_2_4"/>
<dbReference type="OrthoDB" id="9786826at2"/>
<dbReference type="UniPathway" id="UPA00078">
    <property type="reaction ID" value="UER00162"/>
</dbReference>
<dbReference type="Proteomes" id="UP000006388">
    <property type="component" value="Chromosome"/>
</dbReference>
<dbReference type="GO" id="GO:0051537">
    <property type="term" value="F:2 iron, 2 sulfur cluster binding"/>
    <property type="evidence" value="ECO:0007669"/>
    <property type="project" value="UniProtKB-KW"/>
</dbReference>
<dbReference type="GO" id="GO:0051539">
    <property type="term" value="F:4 iron, 4 sulfur cluster binding"/>
    <property type="evidence" value="ECO:0007669"/>
    <property type="project" value="UniProtKB-KW"/>
</dbReference>
<dbReference type="GO" id="GO:0004076">
    <property type="term" value="F:biotin synthase activity"/>
    <property type="evidence" value="ECO:0007669"/>
    <property type="project" value="UniProtKB-UniRule"/>
</dbReference>
<dbReference type="GO" id="GO:0005506">
    <property type="term" value="F:iron ion binding"/>
    <property type="evidence" value="ECO:0007669"/>
    <property type="project" value="UniProtKB-UniRule"/>
</dbReference>
<dbReference type="GO" id="GO:0009102">
    <property type="term" value="P:biotin biosynthetic process"/>
    <property type="evidence" value="ECO:0007669"/>
    <property type="project" value="UniProtKB-UniRule"/>
</dbReference>
<dbReference type="CDD" id="cd01335">
    <property type="entry name" value="Radical_SAM"/>
    <property type="match status" value="1"/>
</dbReference>
<dbReference type="FunFam" id="3.20.20.70:FF:000011">
    <property type="entry name" value="Biotin synthase"/>
    <property type="match status" value="1"/>
</dbReference>
<dbReference type="Gene3D" id="3.20.20.70">
    <property type="entry name" value="Aldolase class I"/>
    <property type="match status" value="1"/>
</dbReference>
<dbReference type="HAMAP" id="MF_01694">
    <property type="entry name" value="BioB"/>
    <property type="match status" value="1"/>
</dbReference>
<dbReference type="InterPro" id="IPR013785">
    <property type="entry name" value="Aldolase_TIM"/>
</dbReference>
<dbReference type="InterPro" id="IPR010722">
    <property type="entry name" value="BATS_dom"/>
</dbReference>
<dbReference type="InterPro" id="IPR002684">
    <property type="entry name" value="Biotin_synth/BioAB"/>
</dbReference>
<dbReference type="InterPro" id="IPR024177">
    <property type="entry name" value="Biotin_synthase"/>
</dbReference>
<dbReference type="InterPro" id="IPR006638">
    <property type="entry name" value="Elp3/MiaA/NifB-like_rSAM"/>
</dbReference>
<dbReference type="InterPro" id="IPR007197">
    <property type="entry name" value="rSAM"/>
</dbReference>
<dbReference type="NCBIfam" id="TIGR00433">
    <property type="entry name" value="bioB"/>
    <property type="match status" value="1"/>
</dbReference>
<dbReference type="PANTHER" id="PTHR22976">
    <property type="entry name" value="BIOTIN SYNTHASE"/>
    <property type="match status" value="1"/>
</dbReference>
<dbReference type="PANTHER" id="PTHR22976:SF2">
    <property type="entry name" value="BIOTIN SYNTHASE, MITOCHONDRIAL"/>
    <property type="match status" value="1"/>
</dbReference>
<dbReference type="Pfam" id="PF06968">
    <property type="entry name" value="BATS"/>
    <property type="match status" value="1"/>
</dbReference>
<dbReference type="Pfam" id="PF04055">
    <property type="entry name" value="Radical_SAM"/>
    <property type="match status" value="1"/>
</dbReference>
<dbReference type="PIRSF" id="PIRSF001619">
    <property type="entry name" value="Biotin_synth"/>
    <property type="match status" value="1"/>
</dbReference>
<dbReference type="SFLD" id="SFLDF00272">
    <property type="entry name" value="biotin_synthase"/>
    <property type="match status" value="1"/>
</dbReference>
<dbReference type="SFLD" id="SFLDG01278">
    <property type="entry name" value="biotin_synthase_like"/>
    <property type="match status" value="1"/>
</dbReference>
<dbReference type="SMART" id="SM00876">
    <property type="entry name" value="BATS"/>
    <property type="match status" value="1"/>
</dbReference>
<dbReference type="SMART" id="SM00729">
    <property type="entry name" value="Elp3"/>
    <property type="match status" value="1"/>
</dbReference>
<dbReference type="SUPFAM" id="SSF102114">
    <property type="entry name" value="Radical SAM enzymes"/>
    <property type="match status" value="1"/>
</dbReference>
<dbReference type="PROSITE" id="PS51918">
    <property type="entry name" value="RADICAL_SAM"/>
    <property type="match status" value="1"/>
</dbReference>
<sequence length="339" mass="36944">MSSQPVTFQAPVAPIIPTAWPVDDVLALFNLPFNDLIFRAQTVHRENFDPTEVELATLLSIKTGGCPEDCGYCPQAARYDTGVTAQKILPLEEVLTAAREAKAHGATRFCMGAAWREPKDRDLEKVEEMVREVKAMGLETCATLGMLGEGQAEKLKNAGLDYYNHNLDTAPEFYSNVISTRDYQNRIDTLGRVRGAGIKVCCGGIVGMGESRLQRAGLIAQLCNMDPYPESVPVNNLVQVEGTPLHGTDPIDPLEFVRTVAVARITMPKARVRLSAGRREMGEAIQALCFVAGANSIFYGDKLLTTGNPEAMADQELLEKLGMHTRSTAIDARCDVTPS</sequence>
<comment type="function">
    <text evidence="1">Catalyzes the conversion of dethiobiotin (DTB) to biotin by the insertion of a sulfur atom into dethiobiotin via a radical-based mechanism.</text>
</comment>
<comment type="catalytic activity">
    <reaction evidence="1">
        <text>(4R,5S)-dethiobiotin + (sulfur carrier)-SH + 2 reduced [2Fe-2S]-[ferredoxin] + 2 S-adenosyl-L-methionine = (sulfur carrier)-H + biotin + 2 5'-deoxyadenosine + 2 L-methionine + 2 oxidized [2Fe-2S]-[ferredoxin]</text>
        <dbReference type="Rhea" id="RHEA:22060"/>
        <dbReference type="Rhea" id="RHEA-COMP:10000"/>
        <dbReference type="Rhea" id="RHEA-COMP:10001"/>
        <dbReference type="Rhea" id="RHEA-COMP:14737"/>
        <dbReference type="Rhea" id="RHEA-COMP:14739"/>
        <dbReference type="ChEBI" id="CHEBI:17319"/>
        <dbReference type="ChEBI" id="CHEBI:29917"/>
        <dbReference type="ChEBI" id="CHEBI:33737"/>
        <dbReference type="ChEBI" id="CHEBI:33738"/>
        <dbReference type="ChEBI" id="CHEBI:57586"/>
        <dbReference type="ChEBI" id="CHEBI:57844"/>
        <dbReference type="ChEBI" id="CHEBI:59789"/>
        <dbReference type="ChEBI" id="CHEBI:64428"/>
        <dbReference type="ChEBI" id="CHEBI:149473"/>
        <dbReference type="EC" id="2.8.1.6"/>
    </reaction>
</comment>
<comment type="cofactor">
    <cofactor evidence="1">
        <name>[4Fe-4S] cluster</name>
        <dbReference type="ChEBI" id="CHEBI:49883"/>
    </cofactor>
    <text evidence="1">Binds 1 [4Fe-4S] cluster. The cluster is coordinated with 3 cysteines and an exchangeable S-adenosyl-L-methionine.</text>
</comment>
<comment type="cofactor">
    <cofactor evidence="1">
        <name>[2Fe-2S] cluster</name>
        <dbReference type="ChEBI" id="CHEBI:190135"/>
    </cofactor>
    <text evidence="1">Binds 1 [2Fe-2S] cluster. The cluster is coordinated with 3 cysteines and 1 arginine.</text>
</comment>
<comment type="pathway">
    <text evidence="1">Cofactor biosynthesis; biotin biosynthesis; biotin from 7,8-diaminononanoate: step 2/2.</text>
</comment>
<comment type="subunit">
    <text evidence="1">Homodimer.</text>
</comment>
<comment type="similarity">
    <text evidence="1">Belongs to the radical SAM superfamily. Biotin synthase family.</text>
</comment>
<feature type="chain" id="PRO_0000381433" description="Biotin synthase">
    <location>
        <begin position="1"/>
        <end position="339"/>
    </location>
</feature>
<feature type="domain" description="Radical SAM core" evidence="2">
    <location>
        <begin position="51"/>
        <end position="278"/>
    </location>
</feature>
<feature type="binding site" evidence="1">
    <location>
        <position position="66"/>
    </location>
    <ligand>
        <name>[4Fe-4S] cluster</name>
        <dbReference type="ChEBI" id="CHEBI:49883"/>
        <note>4Fe-4S-S-AdoMet</note>
    </ligand>
</feature>
<feature type="binding site" evidence="1">
    <location>
        <position position="70"/>
    </location>
    <ligand>
        <name>[4Fe-4S] cluster</name>
        <dbReference type="ChEBI" id="CHEBI:49883"/>
        <note>4Fe-4S-S-AdoMet</note>
    </ligand>
</feature>
<feature type="binding site" evidence="1">
    <location>
        <position position="73"/>
    </location>
    <ligand>
        <name>[4Fe-4S] cluster</name>
        <dbReference type="ChEBI" id="CHEBI:49883"/>
        <note>4Fe-4S-S-AdoMet</note>
    </ligand>
</feature>
<feature type="binding site" evidence="1">
    <location>
        <position position="110"/>
    </location>
    <ligand>
        <name>[2Fe-2S] cluster</name>
        <dbReference type="ChEBI" id="CHEBI:190135"/>
    </ligand>
</feature>
<feature type="binding site" evidence="1">
    <location>
        <position position="141"/>
    </location>
    <ligand>
        <name>[2Fe-2S] cluster</name>
        <dbReference type="ChEBI" id="CHEBI:190135"/>
    </ligand>
</feature>
<feature type="binding site" evidence="1">
    <location>
        <position position="201"/>
    </location>
    <ligand>
        <name>[2Fe-2S] cluster</name>
        <dbReference type="ChEBI" id="CHEBI:190135"/>
    </ligand>
</feature>
<feature type="binding site" evidence="1">
    <location>
        <position position="273"/>
    </location>
    <ligand>
        <name>[2Fe-2S] cluster</name>
        <dbReference type="ChEBI" id="CHEBI:190135"/>
    </ligand>
</feature>
<gene>
    <name evidence="1" type="primary">bioB</name>
    <name type="ordered locus">mma_0123</name>
</gene>
<name>BIOB_JANMA</name>